<organism>
    <name type="scientific">Mus musculus</name>
    <name type="common">Mouse</name>
    <dbReference type="NCBI Taxonomy" id="10090"/>
    <lineage>
        <taxon>Eukaryota</taxon>
        <taxon>Metazoa</taxon>
        <taxon>Chordata</taxon>
        <taxon>Craniata</taxon>
        <taxon>Vertebrata</taxon>
        <taxon>Euteleostomi</taxon>
        <taxon>Mammalia</taxon>
        <taxon>Eutheria</taxon>
        <taxon>Euarchontoglires</taxon>
        <taxon>Glires</taxon>
        <taxon>Rodentia</taxon>
        <taxon>Myomorpha</taxon>
        <taxon>Muroidea</taxon>
        <taxon>Muridae</taxon>
        <taxon>Murinae</taxon>
        <taxon>Mus</taxon>
        <taxon>Mus</taxon>
    </lineage>
</organism>
<keyword id="KW-0002">3D-structure</keyword>
<keyword id="KW-0903">Direct protein sequencing</keyword>
<keyword id="KW-1015">Disulfide bond</keyword>
<keyword id="KW-0325">Glycoprotein</keyword>
<keyword id="KW-0393">Immunoglobulin domain</keyword>
<keyword id="KW-0472">Membrane</keyword>
<keyword id="KW-0675">Receptor</keyword>
<keyword id="KW-1185">Reference proteome</keyword>
<keyword id="KW-0812">Transmembrane</keyword>
<keyword id="KW-1133">Transmembrane helix</keyword>
<evidence type="ECO:0000255" key="1"/>
<evidence type="ECO:0000305" key="2"/>
<evidence type="ECO:0007829" key="3">
    <source>
        <dbReference type="PDB" id="1SBB"/>
    </source>
</evidence>
<evidence type="ECO:0007829" key="4">
    <source>
        <dbReference type="PDB" id="6G9Q"/>
    </source>
</evidence>
<proteinExistence type="evidence at protein level"/>
<name>TCB1_MOUSE</name>
<feature type="chain" id="PRO_0000184527" description="T-cell receptor beta-1 chain C region">
    <location>
        <begin position="1" status="less than"/>
        <end position="173"/>
    </location>
</feature>
<feature type="transmembrane region" description="Helical" evidence="1">
    <location>
        <begin position="146"/>
        <end position="167"/>
    </location>
</feature>
<feature type="topological domain" description="Cytoplasmic" evidence="1">
    <location>
        <begin position="168"/>
        <end position="173"/>
    </location>
</feature>
<feature type="region of interest" description="C region">
    <location>
        <begin position="1"/>
        <end position="146"/>
    </location>
</feature>
<feature type="glycosylation site" description="N-linked (GlcNAc...) asparagine" evidence="1">
    <location>
        <position position="67"/>
    </location>
</feature>
<feature type="glycosylation site" description="N-linked (GlcNAc...) asparagine" evidence="1">
    <location>
        <position position="116"/>
    </location>
</feature>
<feature type="disulfide bond">
    <location>
        <begin position="31"/>
        <end position="71"/>
    </location>
</feature>
<feature type="sequence variant" description="In clone 86T1.">
    <original>Y</original>
    <variation>H</variation>
    <location>
        <position position="70"/>
    </location>
</feature>
<feature type="non-terminal residue">
    <location>
        <position position="1"/>
    </location>
</feature>
<feature type="helix" evidence="4">
    <location>
        <begin position="3"/>
        <end position="5"/>
    </location>
</feature>
<feature type="strand" evidence="4">
    <location>
        <begin position="10"/>
        <end position="15"/>
    </location>
</feature>
<feature type="helix" evidence="4">
    <location>
        <begin position="18"/>
        <end position="24"/>
    </location>
</feature>
<feature type="strand" evidence="4">
    <location>
        <begin position="25"/>
        <end position="39"/>
    </location>
</feature>
<feature type="strand" evidence="4">
    <location>
        <begin position="41"/>
        <end position="47"/>
    </location>
</feature>
<feature type="strand" evidence="4">
    <location>
        <begin position="50"/>
        <end position="52"/>
    </location>
</feature>
<feature type="strand" evidence="4">
    <location>
        <begin position="56"/>
        <end position="58"/>
    </location>
</feature>
<feature type="strand" evidence="4">
    <location>
        <begin position="63"/>
        <end position="66"/>
    </location>
</feature>
<feature type="strand" evidence="4">
    <location>
        <begin position="69"/>
        <end position="79"/>
    </location>
</feature>
<feature type="helix" evidence="4">
    <location>
        <begin position="80"/>
        <end position="84"/>
    </location>
</feature>
<feature type="strand" evidence="4">
    <location>
        <begin position="89"/>
        <end position="96"/>
    </location>
</feature>
<feature type="strand" evidence="3">
    <location>
        <begin position="101"/>
        <end position="103"/>
    </location>
</feature>
<feature type="strand" evidence="4">
    <location>
        <begin position="107"/>
        <end position="109"/>
    </location>
</feature>
<feature type="strand" evidence="4">
    <location>
        <begin position="115"/>
        <end position="122"/>
    </location>
</feature>
<protein>
    <recommendedName>
        <fullName>T-cell receptor beta-1 chain C region</fullName>
    </recommendedName>
</protein>
<comment type="subcellular location">
    <subcellularLocation>
        <location evidence="2">Membrane</location>
        <topology evidence="2">Single-pass membrane protein</topology>
    </subcellularLocation>
</comment>
<comment type="miscellaneous">
    <text>Clone B10.A was isolated from a cytotoxic T lymphocyte.</text>
</comment>
<comment type="miscellaneous">
    <text>Clone 86T1 was isolated from a cytotoxic T lymphocyte.</text>
</comment>
<accession>P01852</accession>
<sequence>EDLRNVTPPKVSLFEPSKAEIANKQKATLVCLARGFFPDHVELSWWVNGKEVHSGVSTDPQAYKESNYSYCLSSRLRVSATFWHNPRNHFRCQVQFHGLSEEDKWPEGSPKPVTQNISAEAWGRADCGITSASYQQGVLSATILYEILLGKATLYAVLVSTLVVMAMVKRKNS</sequence>
<dbReference type="PIR" id="B93336">
    <property type="entry name" value="RWMS1C"/>
</dbReference>
<dbReference type="PDB" id="1G6R">
    <property type="method" value="X-ray"/>
    <property type="resolution" value="2.80 A"/>
    <property type="chains" value="B/D=1-127"/>
</dbReference>
<dbReference type="PDB" id="1NFD">
    <property type="method" value="X-ray"/>
    <property type="resolution" value="2.80 A"/>
    <property type="chains" value="B/D=1-127"/>
</dbReference>
<dbReference type="PDB" id="1SBB">
    <property type="method" value="X-ray"/>
    <property type="resolution" value="2.40 A"/>
    <property type="chains" value="A/C=1-126"/>
</dbReference>
<dbReference type="PDB" id="3C6L">
    <property type="method" value="X-ray"/>
    <property type="resolution" value="3.40 A"/>
    <property type="chains" value="B/F=1-126"/>
</dbReference>
<dbReference type="PDB" id="3MBE">
    <property type="method" value="X-ray"/>
    <property type="resolution" value="2.89 A"/>
    <property type="chains" value="D/H=1-136"/>
</dbReference>
<dbReference type="PDB" id="6G9Q">
    <property type="method" value="X-ray"/>
    <property type="resolution" value="1.89 A"/>
    <property type="chains" value="H=1-127"/>
</dbReference>
<dbReference type="PDBsum" id="1G6R"/>
<dbReference type="PDBsum" id="1NFD"/>
<dbReference type="PDBsum" id="1SBB"/>
<dbReference type="PDBsum" id="3C6L"/>
<dbReference type="PDBsum" id="3MBE"/>
<dbReference type="PDBsum" id="6G9Q"/>
<dbReference type="SMR" id="P01852"/>
<dbReference type="FunCoup" id="P01852">
    <property type="interactions" value="89"/>
</dbReference>
<dbReference type="IntAct" id="P01852">
    <property type="interactions" value="1"/>
</dbReference>
<dbReference type="GlyGen" id="P01852">
    <property type="glycosylation" value="2 sites"/>
</dbReference>
<dbReference type="PhosphoSitePlus" id="P01852"/>
<dbReference type="ABCD" id="P01852">
    <property type="antibodies" value="1 sequenced antibody"/>
</dbReference>
<dbReference type="UCSC" id="uc009bok.1">
    <property type="organism name" value="mouse"/>
</dbReference>
<dbReference type="InParanoid" id="P01852"/>
<dbReference type="EvolutionaryTrace" id="P01852"/>
<dbReference type="Proteomes" id="UP000000589">
    <property type="component" value="Unplaced"/>
</dbReference>
<dbReference type="RNAct" id="P01852">
    <property type="molecule type" value="protein"/>
</dbReference>
<dbReference type="GO" id="GO:0042105">
    <property type="term" value="C:alpha-beta T cell receptor complex"/>
    <property type="evidence" value="ECO:0000318"/>
    <property type="project" value="GO_Central"/>
</dbReference>
<dbReference type="CDD" id="cd05769">
    <property type="entry name" value="IgC1_TCR_beta"/>
    <property type="match status" value="1"/>
</dbReference>
<dbReference type="FunFam" id="2.60.40.10:FF:001090">
    <property type="entry name" value="T cell receptor beta constant 1"/>
    <property type="match status" value="1"/>
</dbReference>
<dbReference type="Gene3D" id="2.60.40.10">
    <property type="entry name" value="Immunoglobulins"/>
    <property type="match status" value="1"/>
</dbReference>
<dbReference type="InterPro" id="IPR007110">
    <property type="entry name" value="Ig-like_dom"/>
</dbReference>
<dbReference type="InterPro" id="IPR036179">
    <property type="entry name" value="Ig-like_dom_sf"/>
</dbReference>
<dbReference type="InterPro" id="IPR013783">
    <property type="entry name" value="Ig-like_fold"/>
</dbReference>
<dbReference type="InterPro" id="IPR003597">
    <property type="entry name" value="Ig_C1-set"/>
</dbReference>
<dbReference type="InterPro" id="IPR050380">
    <property type="entry name" value="Immune_Resp_Modulators"/>
</dbReference>
<dbReference type="PANTHER" id="PTHR23411">
    <property type="entry name" value="TAPASIN"/>
    <property type="match status" value="1"/>
</dbReference>
<dbReference type="Pfam" id="PF07654">
    <property type="entry name" value="C1-set"/>
    <property type="match status" value="1"/>
</dbReference>
<dbReference type="SMART" id="SM00407">
    <property type="entry name" value="IGc1"/>
    <property type="match status" value="1"/>
</dbReference>
<dbReference type="SUPFAM" id="SSF48726">
    <property type="entry name" value="Immunoglobulin"/>
    <property type="match status" value="1"/>
</dbReference>
<dbReference type="PROSITE" id="PS50835">
    <property type="entry name" value="IG_LIKE"/>
    <property type="match status" value="1"/>
</dbReference>
<reference key="1">
    <citation type="journal article" date="1984" name="Nature">
        <title>Genomic organization and sequence of T-cell receptor beta-chain constant- and joining-region genes.</title>
        <authorList>
            <person name="Gascoigne N.R.J."/>
            <person name="Chien Y."/>
            <person name="Becker D.M."/>
            <person name="Kavaler J."/>
            <person name="Davis M.M."/>
        </authorList>
    </citation>
    <scope>NUCLEOTIDE SEQUENCE [GENOMIC DNA]</scope>
    <source>
        <strain>B10.A</strain>
    </source>
</reference>
<reference key="2">
    <citation type="journal article" date="1984" name="Nature">
        <title>Sequence relationships between putative T-cell receptor polypeptides and immunoglobulins.</title>
        <authorList>
            <person name="Hedrick S.M."/>
            <person name="Nielsen E.A."/>
            <person name="Kavaler J."/>
            <person name="Cohen D.I."/>
            <person name="Davis M.M."/>
        </authorList>
    </citation>
    <scope>NUCLEOTIDE SEQUENCE (CLONE 86T1)</scope>
</reference>
<reference key="3">
    <citation type="submission" date="2009-01" db="UniProtKB">
        <authorList>
            <person name="Lubec G."/>
            <person name="Sunyer B."/>
            <person name="Chen W.-Q."/>
        </authorList>
    </citation>
    <scope>PROTEIN SEQUENCE OF 19-26</scope>
    <scope>IDENTIFICATION BY MASS SPECTROMETRY</scope>
    <source>
        <strain>OF1</strain>
        <tissue>Hippocampus</tissue>
    </source>
</reference>
<reference key="4">
    <citation type="journal article" date="1998" name="Immunity">
        <title>Three-dimensional structure of the complex between a T cell receptor beta chain and the superantigen staphylococcal enterotoxin B.</title>
        <authorList>
            <person name="Li H."/>
            <person name="Llera A."/>
            <person name="Tsuchiya D."/>
            <person name="Leder L."/>
            <person name="Ysern X."/>
            <person name="Schlievert P.M."/>
            <person name="Karjalainen K."/>
            <person name="Mariuzza R.A."/>
        </authorList>
    </citation>
    <scope>X-RAY CRYSTALLOGRAPHY (2.4 ANGSTROMS) OF 1-126</scope>
</reference>